<proteinExistence type="inferred from homology"/>
<accession>B6YUC9</accession>
<dbReference type="EC" id="2.7.7.67" evidence="1"/>
<dbReference type="EMBL" id="CP000855">
    <property type="protein sequence ID" value="ACJ17114.1"/>
    <property type="molecule type" value="Genomic_DNA"/>
</dbReference>
<dbReference type="RefSeq" id="WP_012572586.1">
    <property type="nucleotide sequence ID" value="NC_011529.1"/>
</dbReference>
<dbReference type="SMR" id="B6YUC9"/>
<dbReference type="STRING" id="523850.TON_1624"/>
<dbReference type="GeneID" id="7018663"/>
<dbReference type="KEGG" id="ton:TON_1624"/>
<dbReference type="PATRIC" id="fig|523850.10.peg.1638"/>
<dbReference type="eggNOG" id="arCOG04106">
    <property type="taxonomic scope" value="Archaea"/>
</dbReference>
<dbReference type="HOGENOM" id="CLU_105710_0_0_2"/>
<dbReference type="OrthoDB" id="45383at2157"/>
<dbReference type="UniPathway" id="UPA00940"/>
<dbReference type="Proteomes" id="UP000002727">
    <property type="component" value="Chromosome"/>
</dbReference>
<dbReference type="GO" id="GO:0005886">
    <property type="term" value="C:plasma membrane"/>
    <property type="evidence" value="ECO:0007669"/>
    <property type="project" value="UniProtKB-SubCell"/>
</dbReference>
<dbReference type="GO" id="GO:0043338">
    <property type="term" value="F:CDP-2,3-bis-(O-geranylgeranyl)-sn-glycerol synthase activity"/>
    <property type="evidence" value="ECO:0007669"/>
    <property type="project" value="UniProtKB-EC"/>
</dbReference>
<dbReference type="GO" id="GO:0046474">
    <property type="term" value="P:glycerophospholipid biosynthetic process"/>
    <property type="evidence" value="ECO:0007669"/>
    <property type="project" value="UniProtKB-UniRule"/>
</dbReference>
<dbReference type="HAMAP" id="MF_01117">
    <property type="entry name" value="CDP_archaeol_synth"/>
    <property type="match status" value="1"/>
</dbReference>
<dbReference type="InterPro" id="IPR032690">
    <property type="entry name" value="CarS"/>
</dbReference>
<dbReference type="InterPro" id="IPR002726">
    <property type="entry name" value="CarS_archaea"/>
</dbReference>
<dbReference type="NCBIfam" id="NF003114">
    <property type="entry name" value="PRK04032.1"/>
    <property type="match status" value="1"/>
</dbReference>
<dbReference type="PANTHER" id="PTHR39650">
    <property type="entry name" value="CDP-ARCHAEOL SYNTHASE"/>
    <property type="match status" value="1"/>
</dbReference>
<dbReference type="PANTHER" id="PTHR39650:SF1">
    <property type="entry name" value="CDP-ARCHAEOL SYNTHASE"/>
    <property type="match status" value="1"/>
</dbReference>
<dbReference type="Pfam" id="PF01864">
    <property type="entry name" value="CarS-like"/>
    <property type="match status" value="1"/>
</dbReference>
<feature type="chain" id="PRO_1000137226" description="CDP-archaeol synthase">
    <location>
        <begin position="1"/>
        <end position="170"/>
    </location>
</feature>
<feature type="transmembrane region" description="Helical" evidence="1">
    <location>
        <begin position="6"/>
        <end position="26"/>
    </location>
</feature>
<feature type="transmembrane region" description="Helical" evidence="1">
    <location>
        <begin position="53"/>
        <end position="73"/>
    </location>
</feature>
<feature type="transmembrane region" description="Helical" evidence="1">
    <location>
        <begin position="83"/>
        <end position="103"/>
    </location>
</feature>
<feature type="transmembrane region" description="Helical" evidence="1">
    <location>
        <begin position="114"/>
        <end position="134"/>
    </location>
</feature>
<feature type="transmembrane region" description="Helical" evidence="1">
    <location>
        <begin position="140"/>
        <end position="160"/>
    </location>
</feature>
<name>CDPAS_THEON</name>
<reference key="1">
    <citation type="journal article" date="2008" name="J. Bacteriol.">
        <title>The complete genome sequence of Thermococcus onnurineus NA1 reveals a mixed heterotrophic and carboxydotrophic metabolism.</title>
        <authorList>
            <person name="Lee H.S."/>
            <person name="Kang S.G."/>
            <person name="Bae S.S."/>
            <person name="Lim J.K."/>
            <person name="Cho Y."/>
            <person name="Kim Y.J."/>
            <person name="Jeon J.H."/>
            <person name="Cha S.-S."/>
            <person name="Kwon K.K."/>
            <person name="Kim H.-T."/>
            <person name="Park C.-J."/>
            <person name="Lee H.-W."/>
            <person name="Kim S.I."/>
            <person name="Chun J."/>
            <person name="Colwell R.R."/>
            <person name="Kim S.-J."/>
            <person name="Lee J.-H."/>
        </authorList>
    </citation>
    <scope>NUCLEOTIDE SEQUENCE [LARGE SCALE GENOMIC DNA]</scope>
    <source>
        <strain>NA1</strain>
    </source>
</reference>
<evidence type="ECO:0000255" key="1">
    <source>
        <dbReference type="HAMAP-Rule" id="MF_01117"/>
    </source>
</evidence>
<gene>
    <name evidence="1" type="primary">carS</name>
    <name type="ordered locus">TON_1624</name>
</gene>
<keyword id="KW-1003">Cell membrane</keyword>
<keyword id="KW-0444">Lipid biosynthesis</keyword>
<keyword id="KW-0443">Lipid metabolism</keyword>
<keyword id="KW-0460">Magnesium</keyword>
<keyword id="KW-0472">Membrane</keyword>
<keyword id="KW-0594">Phospholipid biosynthesis</keyword>
<keyword id="KW-1208">Phospholipid metabolism</keyword>
<keyword id="KW-0808">Transferase</keyword>
<keyword id="KW-0812">Transmembrane</keyword>
<keyword id="KW-1133">Transmembrane helix</keyword>
<organism>
    <name type="scientific">Thermococcus onnurineus (strain NA1)</name>
    <dbReference type="NCBI Taxonomy" id="523850"/>
    <lineage>
        <taxon>Archaea</taxon>
        <taxon>Methanobacteriati</taxon>
        <taxon>Methanobacteriota</taxon>
        <taxon>Thermococci</taxon>
        <taxon>Thermococcales</taxon>
        <taxon>Thermococcaceae</taxon>
        <taxon>Thermococcus</taxon>
    </lineage>
</organism>
<protein>
    <recommendedName>
        <fullName evidence="1">CDP-archaeol synthase</fullName>
        <ecNumber evidence="1">2.7.7.67</ecNumber>
    </recommendedName>
    <alternativeName>
        <fullName evidence="1">CDP-2,3-bis-(O-geranylgeranyl)-sn-glycerol synthase</fullName>
    </alternativeName>
</protein>
<comment type="function">
    <text evidence="1">Catalyzes the formation of CDP-2,3-bis-(O-geranylgeranyl)-sn-glycerol (CDP-archaeol) from 2,3-bis-(O-geranylgeranyl)-sn-glycerol 1-phosphate (DGGGP) and CTP. This reaction is the third ether-bond-formation step in the biosynthesis of archaeal membrane lipids.</text>
</comment>
<comment type="catalytic activity">
    <reaction evidence="1">
        <text>2,3-bis-O-(geranylgeranyl)-sn-glycerol 1-phosphate + CTP + H(+) = CDP-2,3-bis-O-(geranylgeranyl)-sn-glycerol + diphosphate</text>
        <dbReference type="Rhea" id="RHEA:25690"/>
        <dbReference type="ChEBI" id="CHEBI:15378"/>
        <dbReference type="ChEBI" id="CHEBI:33019"/>
        <dbReference type="ChEBI" id="CHEBI:37563"/>
        <dbReference type="ChEBI" id="CHEBI:58837"/>
        <dbReference type="ChEBI" id="CHEBI:58838"/>
        <dbReference type="EC" id="2.7.7.67"/>
    </reaction>
</comment>
<comment type="cofactor">
    <cofactor evidence="1">
        <name>Mg(2+)</name>
        <dbReference type="ChEBI" id="CHEBI:18420"/>
    </cofactor>
</comment>
<comment type="pathway">
    <text evidence="1">Membrane lipid metabolism; glycerophospholipid metabolism.</text>
</comment>
<comment type="subcellular location">
    <subcellularLocation>
        <location evidence="1">Cell membrane</location>
        <topology evidence="1">Multi-pass membrane protein</topology>
    </subcellularLocation>
</comment>
<comment type="similarity">
    <text evidence="1">Belongs to the CDP-archaeol synthase family.</text>
</comment>
<sequence length="170" mass="18583">MSLSSLLWAFWYILPAYFANASPVLVGGGRPIDGGRYWKDGRRVFGDGKTWRGLIGGVAIGTAVGALQYFITPEFYGSLGKALLLAFLLSFGALFGDLVGSFFKRRIDLPRGSPAIGLDQLGFLISALAFAYPVKTLDSGQIIFLLVVSPFVHWGANYFAYKMGWKSVPW</sequence>